<accession>O24689</accession>
<reference key="1">
    <citation type="journal article" date="1997" name="Gene">
        <title>Organization of a large gene cluster encoding ribosomal proteins in the cyanobacterium Synechococcus sp. strain PCC 6301: comparison of gene clusters among cyanobacteria, eubacteria and chloroplast genomes.</title>
        <authorList>
            <person name="Sugita M."/>
            <person name="Sugishita H."/>
            <person name="Fujishiro T."/>
            <person name="Tsuboi M."/>
            <person name="Sugita C."/>
            <person name="Endo T."/>
            <person name="Sugiura M."/>
        </authorList>
    </citation>
    <scope>NUCLEOTIDE SEQUENCE [GENOMIC DNA]</scope>
</reference>
<reference key="2">
    <citation type="journal article" date="2007" name="Photosyn. Res.">
        <title>Complete nucleotide sequence of the freshwater unicellular cyanobacterium Synechococcus elongatus PCC 6301 chromosome: gene content and organization.</title>
        <authorList>
            <person name="Sugita C."/>
            <person name="Ogata K."/>
            <person name="Shikata M."/>
            <person name="Jikuya H."/>
            <person name="Takano J."/>
            <person name="Furumichi M."/>
            <person name="Kanehisa M."/>
            <person name="Omata T."/>
            <person name="Sugiura M."/>
            <person name="Sugita M."/>
        </authorList>
    </citation>
    <scope>NUCLEOTIDE SEQUENCE [LARGE SCALE GENOMIC DNA]</scope>
    <source>
        <strain>ATCC 27144 / PCC 6301 / SAUG 1402/1</strain>
    </source>
</reference>
<dbReference type="EMBL" id="AB000111">
    <property type="protein sequence ID" value="BAA22449.1"/>
    <property type="molecule type" value="Genomic_DNA"/>
</dbReference>
<dbReference type="EMBL" id="AP008231">
    <property type="protein sequence ID" value="BAD80055.1"/>
    <property type="molecule type" value="Genomic_DNA"/>
</dbReference>
<dbReference type="RefSeq" id="WP_011244175.1">
    <property type="nucleotide sequence ID" value="NZ_CP085785.1"/>
</dbReference>
<dbReference type="SMR" id="O24689"/>
<dbReference type="GeneID" id="72431115"/>
<dbReference type="KEGG" id="syc:syc1865_d"/>
<dbReference type="eggNOG" id="COG0087">
    <property type="taxonomic scope" value="Bacteria"/>
</dbReference>
<dbReference type="Proteomes" id="UP000001175">
    <property type="component" value="Chromosome"/>
</dbReference>
<dbReference type="GO" id="GO:0022625">
    <property type="term" value="C:cytosolic large ribosomal subunit"/>
    <property type="evidence" value="ECO:0007669"/>
    <property type="project" value="TreeGrafter"/>
</dbReference>
<dbReference type="GO" id="GO:0019843">
    <property type="term" value="F:rRNA binding"/>
    <property type="evidence" value="ECO:0007669"/>
    <property type="project" value="UniProtKB-UniRule"/>
</dbReference>
<dbReference type="GO" id="GO:0003735">
    <property type="term" value="F:structural constituent of ribosome"/>
    <property type="evidence" value="ECO:0007669"/>
    <property type="project" value="InterPro"/>
</dbReference>
<dbReference type="GO" id="GO:0006412">
    <property type="term" value="P:translation"/>
    <property type="evidence" value="ECO:0007669"/>
    <property type="project" value="UniProtKB-UniRule"/>
</dbReference>
<dbReference type="FunFam" id="3.30.160.810:FF:000001">
    <property type="entry name" value="50S ribosomal protein L3"/>
    <property type="match status" value="1"/>
</dbReference>
<dbReference type="FunFam" id="2.40.30.10:FF:000065">
    <property type="entry name" value="50S ribosomal protein L3, chloroplastic"/>
    <property type="match status" value="1"/>
</dbReference>
<dbReference type="Gene3D" id="3.30.160.810">
    <property type="match status" value="1"/>
</dbReference>
<dbReference type="Gene3D" id="2.40.30.10">
    <property type="entry name" value="Translation factors"/>
    <property type="match status" value="1"/>
</dbReference>
<dbReference type="HAMAP" id="MF_01325_B">
    <property type="entry name" value="Ribosomal_uL3_B"/>
    <property type="match status" value="1"/>
</dbReference>
<dbReference type="InterPro" id="IPR000597">
    <property type="entry name" value="Ribosomal_uL3"/>
</dbReference>
<dbReference type="InterPro" id="IPR019927">
    <property type="entry name" value="Ribosomal_uL3_bac/org-type"/>
</dbReference>
<dbReference type="InterPro" id="IPR019926">
    <property type="entry name" value="Ribosomal_uL3_CS"/>
</dbReference>
<dbReference type="InterPro" id="IPR009000">
    <property type="entry name" value="Transl_B-barrel_sf"/>
</dbReference>
<dbReference type="NCBIfam" id="TIGR03625">
    <property type="entry name" value="L3_bact"/>
    <property type="match status" value="1"/>
</dbReference>
<dbReference type="PANTHER" id="PTHR11229">
    <property type="entry name" value="50S RIBOSOMAL PROTEIN L3"/>
    <property type="match status" value="1"/>
</dbReference>
<dbReference type="PANTHER" id="PTHR11229:SF16">
    <property type="entry name" value="LARGE RIBOSOMAL SUBUNIT PROTEIN UL3C"/>
    <property type="match status" value="1"/>
</dbReference>
<dbReference type="Pfam" id="PF00297">
    <property type="entry name" value="Ribosomal_L3"/>
    <property type="match status" value="1"/>
</dbReference>
<dbReference type="SUPFAM" id="SSF50447">
    <property type="entry name" value="Translation proteins"/>
    <property type="match status" value="1"/>
</dbReference>
<dbReference type="PROSITE" id="PS00474">
    <property type="entry name" value="RIBOSOMAL_L3"/>
    <property type="match status" value="1"/>
</dbReference>
<protein>
    <recommendedName>
        <fullName evidence="1">Large ribosomal subunit protein uL3</fullName>
    </recommendedName>
    <alternativeName>
        <fullName evidence="3">50S ribosomal protein L3</fullName>
    </alternativeName>
</protein>
<gene>
    <name evidence="1" type="primary">rplC</name>
    <name evidence="1" type="synonym">rpl3</name>
    <name type="ordered locus">syc1865_d</name>
</gene>
<proteinExistence type="inferred from homology"/>
<comment type="function">
    <text evidence="1">One of the primary rRNA binding proteins, it binds directly near the 3'-end of the 23S rRNA, where it nucleates assembly of the 50S subunit.</text>
</comment>
<comment type="subunit">
    <text evidence="1">Part of the 50S ribosomal subunit. Forms a cluster with proteins L14 and L19.</text>
</comment>
<comment type="similarity">
    <text evidence="1">Belongs to the universal ribosomal protein uL3 family.</text>
</comment>
<keyword id="KW-0687">Ribonucleoprotein</keyword>
<keyword id="KW-0689">Ribosomal protein</keyword>
<keyword id="KW-0694">RNA-binding</keyword>
<keyword id="KW-0699">rRNA-binding</keyword>
<name>RL3_SYNP6</name>
<sequence length="213" mass="22452">MSIGILGTKLGMTQIFDESGKAVPVTVIQAGPCPITQIKTVATDGYNAIQIGFLEVREKQLSKPELGHLSKAGAPPLRHLLEYRVPSTDGLELGQALTADRFEAGQKVDVQGHTIGRGFTGYQKRHGFARGPMSHGSKNHRLPGSTGAGTTPGRVYPGKRMAGRSGNDKTTIRGLTVVRVDADRNLLLVKGSVPGKPGALLNITPATVVGQQA</sequence>
<feature type="chain" id="PRO_0000077175" description="Large ribosomal subunit protein uL3">
    <location>
        <begin position="1"/>
        <end position="213"/>
    </location>
</feature>
<feature type="region of interest" description="Disordered" evidence="2">
    <location>
        <begin position="131"/>
        <end position="168"/>
    </location>
</feature>
<evidence type="ECO:0000255" key="1">
    <source>
        <dbReference type="HAMAP-Rule" id="MF_01325"/>
    </source>
</evidence>
<evidence type="ECO:0000256" key="2">
    <source>
        <dbReference type="SAM" id="MobiDB-lite"/>
    </source>
</evidence>
<evidence type="ECO:0000305" key="3"/>
<organism>
    <name type="scientific">Synechococcus sp. (strain ATCC 27144 / PCC 6301 / SAUG 1402/1)</name>
    <name type="common">Anacystis nidulans</name>
    <dbReference type="NCBI Taxonomy" id="269084"/>
    <lineage>
        <taxon>Bacteria</taxon>
        <taxon>Bacillati</taxon>
        <taxon>Cyanobacteriota</taxon>
        <taxon>Cyanophyceae</taxon>
        <taxon>Synechococcales</taxon>
        <taxon>Synechococcaceae</taxon>
        <taxon>Synechococcus</taxon>
    </lineage>
</organism>